<accession>Q6P7L0</accession>
<comment type="subcellular location">
    <subcellularLocation>
        <location evidence="1">Cytoplasm</location>
    </subcellularLocation>
</comment>
<comment type="similarity">
    <text evidence="2">Belongs to the UPF0456 family.</text>
</comment>
<reference key="1">
    <citation type="submission" date="2006-10" db="EMBL/GenBank/DDBJ databases">
        <authorList>
            <consortium name="Sanger Xenopus tropicalis EST/cDNA project"/>
        </authorList>
    </citation>
    <scope>NUCLEOTIDE SEQUENCE [LARGE SCALE MRNA]</scope>
    <source>
        <tissue>Neurula</tissue>
    </source>
</reference>
<reference key="2">
    <citation type="submission" date="2003-11" db="EMBL/GenBank/DDBJ databases">
        <authorList>
            <consortium name="NIH - Xenopus Gene Collection (XGC) project"/>
        </authorList>
    </citation>
    <scope>NUCLEOTIDE SEQUENCE [LARGE SCALE MRNA]</scope>
    <source>
        <tissue>Embryo</tissue>
    </source>
</reference>
<feature type="chain" id="PRO_0000294481" description="Protein C10">
    <location>
        <begin position="1"/>
        <end position="128"/>
    </location>
</feature>
<protein>
    <recommendedName>
        <fullName>Protein C10</fullName>
    </recommendedName>
</protein>
<sequence length="128" mass="13652">MSSLQRSAPASQNVSLPLEQVKEALGEVLNALQSPTGSARLEEARENSGNDLGKVLQLLLPAAVQIQQEVLQNYGFSPDGEGVLRFARLVKSYESQDPEIAAMSSKLKSFFLPPLPLPPHAGLSAPSS</sequence>
<dbReference type="EMBL" id="CR848390">
    <property type="protein sequence ID" value="CAJ83311.1"/>
    <property type="molecule type" value="mRNA"/>
</dbReference>
<dbReference type="EMBL" id="BC061620">
    <property type="protein sequence ID" value="AAH61620.1"/>
    <property type="molecule type" value="mRNA"/>
</dbReference>
<dbReference type="EMBL" id="BC075420">
    <property type="protein sequence ID" value="AAH75420.1"/>
    <property type="molecule type" value="mRNA"/>
</dbReference>
<dbReference type="SMR" id="Q6P7L0"/>
<dbReference type="FunCoup" id="Q6P7L0">
    <property type="interactions" value="637"/>
</dbReference>
<dbReference type="PaxDb" id="8364-ENSXETP00000051555"/>
<dbReference type="DNASU" id="394516"/>
<dbReference type="KEGG" id="xtr:394516"/>
<dbReference type="CTD" id="138303706"/>
<dbReference type="eggNOG" id="ENOG502S2W0">
    <property type="taxonomic scope" value="Eukaryota"/>
</dbReference>
<dbReference type="HOGENOM" id="CLU_144250_1_0_1"/>
<dbReference type="InParanoid" id="Q6P7L0"/>
<dbReference type="OMA" id="GNDMMKM"/>
<dbReference type="OrthoDB" id="75738at2759"/>
<dbReference type="Proteomes" id="UP000008143">
    <property type="component" value="Chromosome 7"/>
</dbReference>
<dbReference type="Bgee" id="ENSXETG00000036471">
    <property type="expression patterns" value="Expressed in testis and 14 other cell types or tissues"/>
</dbReference>
<dbReference type="GO" id="GO:0005737">
    <property type="term" value="C:cytoplasm"/>
    <property type="evidence" value="ECO:0007669"/>
    <property type="project" value="UniProtKB-SubCell"/>
</dbReference>
<dbReference type="InterPro" id="IPR026317">
    <property type="entry name" value="P_C10"/>
</dbReference>
<dbReference type="PANTHER" id="PTHR13463">
    <property type="entry name" value="PROTEIN C10"/>
    <property type="match status" value="1"/>
</dbReference>
<dbReference type="PANTHER" id="PTHR13463:SF3">
    <property type="entry name" value="PROTEIN C10"/>
    <property type="match status" value="1"/>
</dbReference>
<dbReference type="Pfam" id="PF14974">
    <property type="entry name" value="P_C10"/>
    <property type="match status" value="1"/>
</dbReference>
<organism>
    <name type="scientific">Xenopus tropicalis</name>
    <name type="common">Western clawed frog</name>
    <name type="synonym">Silurana tropicalis</name>
    <dbReference type="NCBI Taxonomy" id="8364"/>
    <lineage>
        <taxon>Eukaryota</taxon>
        <taxon>Metazoa</taxon>
        <taxon>Chordata</taxon>
        <taxon>Craniata</taxon>
        <taxon>Vertebrata</taxon>
        <taxon>Euteleostomi</taxon>
        <taxon>Amphibia</taxon>
        <taxon>Batrachia</taxon>
        <taxon>Anura</taxon>
        <taxon>Pipoidea</taxon>
        <taxon>Pipidae</taxon>
        <taxon>Xenopodinae</taxon>
        <taxon>Xenopus</taxon>
        <taxon>Silurana</taxon>
    </lineage>
</organism>
<keyword id="KW-0963">Cytoplasm</keyword>
<keyword id="KW-1185">Reference proteome</keyword>
<gene>
    <name type="ORF">TNeu030m04.1</name>
</gene>
<name>C10_XENTR</name>
<evidence type="ECO:0000250" key="1"/>
<evidence type="ECO:0000305" key="2"/>
<proteinExistence type="evidence at transcript level"/>